<protein>
    <recommendedName>
        <fullName evidence="1">Ribulokinase</fullName>
        <ecNumber evidence="1">2.7.1.16</ecNumber>
    </recommendedName>
</protein>
<feature type="chain" id="PRO_1000050911" description="Ribulokinase">
    <location>
        <begin position="1"/>
        <end position="564"/>
    </location>
</feature>
<dbReference type="EC" id="2.7.1.16" evidence="1"/>
<dbReference type="EMBL" id="CP000557">
    <property type="protein sequence ID" value="ABO67156.1"/>
    <property type="molecule type" value="Genomic_DNA"/>
</dbReference>
<dbReference type="RefSeq" id="WP_011887524.1">
    <property type="nucleotide sequence ID" value="NC_009328.1"/>
</dbReference>
<dbReference type="SMR" id="A4IPA2"/>
<dbReference type="GeneID" id="87624042"/>
<dbReference type="KEGG" id="gtn:GTNG_1796"/>
<dbReference type="eggNOG" id="COG1069">
    <property type="taxonomic scope" value="Bacteria"/>
</dbReference>
<dbReference type="HOGENOM" id="CLU_009281_9_1_9"/>
<dbReference type="UniPathway" id="UPA00145">
    <property type="reaction ID" value="UER00566"/>
</dbReference>
<dbReference type="Proteomes" id="UP000001578">
    <property type="component" value="Chromosome"/>
</dbReference>
<dbReference type="GO" id="GO:0005737">
    <property type="term" value="C:cytoplasm"/>
    <property type="evidence" value="ECO:0007669"/>
    <property type="project" value="TreeGrafter"/>
</dbReference>
<dbReference type="GO" id="GO:0005524">
    <property type="term" value="F:ATP binding"/>
    <property type="evidence" value="ECO:0007669"/>
    <property type="project" value="UniProtKB-KW"/>
</dbReference>
<dbReference type="GO" id="GO:0019150">
    <property type="term" value="F:D-ribulokinase activity"/>
    <property type="evidence" value="ECO:0007669"/>
    <property type="project" value="RHEA"/>
</dbReference>
<dbReference type="GO" id="GO:0008741">
    <property type="term" value="F:ribulokinase activity"/>
    <property type="evidence" value="ECO:0007669"/>
    <property type="project" value="UniProtKB-UniRule"/>
</dbReference>
<dbReference type="GO" id="GO:0019569">
    <property type="term" value="P:L-arabinose catabolic process to xylulose 5-phosphate"/>
    <property type="evidence" value="ECO:0007669"/>
    <property type="project" value="UniProtKB-UniRule"/>
</dbReference>
<dbReference type="CDD" id="cd07781">
    <property type="entry name" value="ASKHA_NBD_FGGY_L-RBK"/>
    <property type="match status" value="1"/>
</dbReference>
<dbReference type="Gene3D" id="3.30.420.40">
    <property type="match status" value="2"/>
</dbReference>
<dbReference type="HAMAP" id="MF_00520">
    <property type="entry name" value="Ribulokinase"/>
    <property type="match status" value="1"/>
</dbReference>
<dbReference type="InterPro" id="IPR043129">
    <property type="entry name" value="ATPase_NBD"/>
</dbReference>
<dbReference type="InterPro" id="IPR000577">
    <property type="entry name" value="Carb_kinase_FGGY"/>
</dbReference>
<dbReference type="InterPro" id="IPR018485">
    <property type="entry name" value="FGGY_C"/>
</dbReference>
<dbReference type="InterPro" id="IPR018484">
    <property type="entry name" value="FGGY_N"/>
</dbReference>
<dbReference type="InterPro" id="IPR005929">
    <property type="entry name" value="Ribulokinase"/>
</dbReference>
<dbReference type="NCBIfam" id="TIGR01234">
    <property type="entry name" value="L-ribulokinase"/>
    <property type="match status" value="1"/>
</dbReference>
<dbReference type="NCBIfam" id="NF003154">
    <property type="entry name" value="PRK04123.1"/>
    <property type="match status" value="1"/>
</dbReference>
<dbReference type="PANTHER" id="PTHR43435:SF4">
    <property type="entry name" value="FGGY CARBOHYDRATE KINASE DOMAIN-CONTAINING PROTEIN"/>
    <property type="match status" value="1"/>
</dbReference>
<dbReference type="PANTHER" id="PTHR43435">
    <property type="entry name" value="RIBULOKINASE"/>
    <property type="match status" value="1"/>
</dbReference>
<dbReference type="Pfam" id="PF02782">
    <property type="entry name" value="FGGY_C"/>
    <property type="match status" value="1"/>
</dbReference>
<dbReference type="Pfam" id="PF00370">
    <property type="entry name" value="FGGY_N"/>
    <property type="match status" value="1"/>
</dbReference>
<dbReference type="PIRSF" id="PIRSF000538">
    <property type="entry name" value="GlpK"/>
    <property type="match status" value="1"/>
</dbReference>
<dbReference type="SUPFAM" id="SSF53067">
    <property type="entry name" value="Actin-like ATPase domain"/>
    <property type="match status" value="2"/>
</dbReference>
<name>ARAB_GEOTN</name>
<evidence type="ECO:0000255" key="1">
    <source>
        <dbReference type="HAMAP-Rule" id="MF_00520"/>
    </source>
</evidence>
<proteinExistence type="inferred from homology"/>
<accession>A4IPA2</accession>
<sequence length="564" mass="61905">MGKKYVIGIDYGTESGRAVLVDLEGNEIADHVTPYPHGVIDEVLPESNVQLEPDWALQHPGDYIEVLATAVPAVLQKSGVNPADVIGVGIDFTACTMLPVDASGEPLCLKPEFKHRPHSWVKLWKHHAAQDEANLLNEIAAKRGEAFLPRYGGKISSEWMIAKIWQILNEAPDIYDQTDLFLEATDWVIFKMTGQMVRNSCTAGYKSIWHKQDGYPSKEFFRALDPRLEHLTETKLRGPIVPLGTRAGVLTKEMAAMMGLLPGTAVAVGNVDAHAAVPGVGVVEPGKLVMAMGTSICHMLLGTEEKYVEGMCGVVEDGIIPGYFGYEAGQSAVGDIFAWYVEQGVPAYVKEAAEKEGVSVHEWLEKRAAAYRPGETGLLALDWWNGNRSVLVDTDLTGLIIGYTLLTKPEEVYRALLEATAFGTRKIIDAFVENGVNVDELYACGGLPQKNKLLMQIYADVTNREIKIAASKQTPAVGAAMFAAVAAGKENGGYESIVEAAQNMGKVREETFKPIPENVAIYEQLYQEYTKLHDYFGRGENDVMKRLKHWKETARAAKESMTLS</sequence>
<keyword id="KW-0054">Arabinose catabolism</keyword>
<keyword id="KW-0067">ATP-binding</keyword>
<keyword id="KW-0119">Carbohydrate metabolism</keyword>
<keyword id="KW-0418">Kinase</keyword>
<keyword id="KW-0547">Nucleotide-binding</keyword>
<keyword id="KW-0808">Transferase</keyword>
<comment type="catalytic activity">
    <reaction evidence="1">
        <text>D-ribulose + ATP = D-ribulose 5-phosphate + ADP + H(+)</text>
        <dbReference type="Rhea" id="RHEA:17601"/>
        <dbReference type="ChEBI" id="CHEBI:15378"/>
        <dbReference type="ChEBI" id="CHEBI:17173"/>
        <dbReference type="ChEBI" id="CHEBI:30616"/>
        <dbReference type="ChEBI" id="CHEBI:58121"/>
        <dbReference type="ChEBI" id="CHEBI:456216"/>
        <dbReference type="EC" id="2.7.1.16"/>
    </reaction>
</comment>
<comment type="catalytic activity">
    <reaction evidence="1">
        <text>L-ribulose + ATP = L-ribulose 5-phosphate + ADP + H(+)</text>
        <dbReference type="Rhea" id="RHEA:22072"/>
        <dbReference type="ChEBI" id="CHEBI:15378"/>
        <dbReference type="ChEBI" id="CHEBI:16880"/>
        <dbReference type="ChEBI" id="CHEBI:30616"/>
        <dbReference type="ChEBI" id="CHEBI:58226"/>
        <dbReference type="ChEBI" id="CHEBI:456216"/>
        <dbReference type="EC" id="2.7.1.16"/>
    </reaction>
</comment>
<comment type="pathway">
    <text evidence="1">Carbohydrate degradation; L-arabinose degradation via L-ribulose; D-xylulose 5-phosphate from L-arabinose (bacterial route): step 2/3.</text>
</comment>
<comment type="similarity">
    <text evidence="1">Belongs to the ribulokinase family.</text>
</comment>
<reference key="1">
    <citation type="journal article" date="2007" name="Proc. Natl. Acad. Sci. U.S.A.">
        <title>Genome and proteome of long-chain alkane degrading Geobacillus thermodenitrificans NG80-2 isolated from a deep-subsurface oil reservoir.</title>
        <authorList>
            <person name="Feng L."/>
            <person name="Wang W."/>
            <person name="Cheng J."/>
            <person name="Ren Y."/>
            <person name="Zhao G."/>
            <person name="Gao C."/>
            <person name="Tang Y."/>
            <person name="Liu X."/>
            <person name="Han W."/>
            <person name="Peng X."/>
            <person name="Liu R."/>
            <person name="Wang L."/>
        </authorList>
    </citation>
    <scope>NUCLEOTIDE SEQUENCE [LARGE SCALE GENOMIC DNA]</scope>
    <source>
        <strain>NG80-2</strain>
    </source>
</reference>
<organism>
    <name type="scientific">Geobacillus thermodenitrificans (strain NG80-2)</name>
    <dbReference type="NCBI Taxonomy" id="420246"/>
    <lineage>
        <taxon>Bacteria</taxon>
        <taxon>Bacillati</taxon>
        <taxon>Bacillota</taxon>
        <taxon>Bacilli</taxon>
        <taxon>Bacillales</taxon>
        <taxon>Anoxybacillaceae</taxon>
        <taxon>Geobacillus</taxon>
    </lineage>
</organism>
<gene>
    <name evidence="1" type="primary">araB</name>
    <name type="ordered locus">GTNG_1796</name>
</gene>